<name>ATPE_CLOP1</name>
<feature type="chain" id="PRO_0000265801" description="ATP synthase epsilon chain">
    <location>
        <begin position="1"/>
        <end position="133"/>
    </location>
</feature>
<protein>
    <recommendedName>
        <fullName evidence="1">ATP synthase epsilon chain</fullName>
    </recommendedName>
    <alternativeName>
        <fullName evidence="1">ATP synthase F1 sector epsilon subunit</fullName>
    </alternativeName>
    <alternativeName>
        <fullName evidence="1">F-ATPase epsilon subunit</fullName>
    </alternativeName>
</protein>
<reference key="1">
    <citation type="journal article" date="2006" name="Genome Res.">
        <title>Skewed genomic variability in strains of the toxigenic bacterial pathogen, Clostridium perfringens.</title>
        <authorList>
            <person name="Myers G.S.A."/>
            <person name="Rasko D.A."/>
            <person name="Cheung J.K."/>
            <person name="Ravel J."/>
            <person name="Seshadri R."/>
            <person name="DeBoy R.T."/>
            <person name="Ren Q."/>
            <person name="Varga J."/>
            <person name="Awad M.M."/>
            <person name="Brinkac L.M."/>
            <person name="Daugherty S.C."/>
            <person name="Haft D.H."/>
            <person name="Dodson R.J."/>
            <person name="Madupu R."/>
            <person name="Nelson W.C."/>
            <person name="Rosovitz M.J."/>
            <person name="Sullivan S.A."/>
            <person name="Khouri H."/>
            <person name="Dimitrov G.I."/>
            <person name="Watkins K.L."/>
            <person name="Mulligan S."/>
            <person name="Benton J."/>
            <person name="Radune D."/>
            <person name="Fisher D.J."/>
            <person name="Atkins H.S."/>
            <person name="Hiscox T."/>
            <person name="Jost B.H."/>
            <person name="Billington S.J."/>
            <person name="Songer J.G."/>
            <person name="McClane B.A."/>
            <person name="Titball R.W."/>
            <person name="Rood J.I."/>
            <person name="Melville S.B."/>
            <person name="Paulsen I.T."/>
        </authorList>
    </citation>
    <scope>NUCLEOTIDE SEQUENCE [LARGE SCALE GENOMIC DNA]</scope>
    <source>
        <strain>ATCC 13124 / DSM 756 / JCM 1290 / NCIMB 6125 / NCTC 8237 / S 107 / Type A</strain>
    </source>
</reference>
<keyword id="KW-0066">ATP synthesis</keyword>
<keyword id="KW-1003">Cell membrane</keyword>
<keyword id="KW-0139">CF(1)</keyword>
<keyword id="KW-0375">Hydrogen ion transport</keyword>
<keyword id="KW-0406">Ion transport</keyword>
<keyword id="KW-0472">Membrane</keyword>
<keyword id="KW-0813">Transport</keyword>
<evidence type="ECO:0000255" key="1">
    <source>
        <dbReference type="HAMAP-Rule" id="MF_00530"/>
    </source>
</evidence>
<dbReference type="EMBL" id="CP000246">
    <property type="protein sequence ID" value="ABG83788.1"/>
    <property type="molecule type" value="Genomic_DNA"/>
</dbReference>
<dbReference type="RefSeq" id="WP_003452358.1">
    <property type="nucleotide sequence ID" value="NC_008261.1"/>
</dbReference>
<dbReference type="SMR" id="Q0TNC5"/>
<dbReference type="STRING" id="195103.CPF_2451"/>
<dbReference type="PaxDb" id="195103-CPF_2451"/>
<dbReference type="KEGG" id="cpf:CPF_2451"/>
<dbReference type="eggNOG" id="COG0355">
    <property type="taxonomic scope" value="Bacteria"/>
</dbReference>
<dbReference type="HOGENOM" id="CLU_084338_1_3_9"/>
<dbReference type="Proteomes" id="UP000001823">
    <property type="component" value="Chromosome"/>
</dbReference>
<dbReference type="GO" id="GO:0005886">
    <property type="term" value="C:plasma membrane"/>
    <property type="evidence" value="ECO:0007669"/>
    <property type="project" value="UniProtKB-SubCell"/>
</dbReference>
<dbReference type="GO" id="GO:0045259">
    <property type="term" value="C:proton-transporting ATP synthase complex"/>
    <property type="evidence" value="ECO:0007669"/>
    <property type="project" value="UniProtKB-KW"/>
</dbReference>
<dbReference type="GO" id="GO:0005524">
    <property type="term" value="F:ATP binding"/>
    <property type="evidence" value="ECO:0007669"/>
    <property type="project" value="UniProtKB-UniRule"/>
</dbReference>
<dbReference type="GO" id="GO:0046933">
    <property type="term" value="F:proton-transporting ATP synthase activity, rotational mechanism"/>
    <property type="evidence" value="ECO:0007669"/>
    <property type="project" value="UniProtKB-UniRule"/>
</dbReference>
<dbReference type="CDD" id="cd12152">
    <property type="entry name" value="F1-ATPase_delta"/>
    <property type="match status" value="1"/>
</dbReference>
<dbReference type="FunFam" id="1.20.5.440:FF:000001">
    <property type="entry name" value="ATP synthase epsilon chain"/>
    <property type="match status" value="1"/>
</dbReference>
<dbReference type="Gene3D" id="1.20.5.440">
    <property type="entry name" value="ATP synthase delta/epsilon subunit, C-terminal domain"/>
    <property type="match status" value="1"/>
</dbReference>
<dbReference type="Gene3D" id="2.60.15.10">
    <property type="entry name" value="F0F1 ATP synthase delta/epsilon subunit, N-terminal"/>
    <property type="match status" value="1"/>
</dbReference>
<dbReference type="HAMAP" id="MF_00530">
    <property type="entry name" value="ATP_synth_epsil_bac"/>
    <property type="match status" value="1"/>
</dbReference>
<dbReference type="InterPro" id="IPR036794">
    <property type="entry name" value="ATP_F1_dsu/esu_C_sf"/>
</dbReference>
<dbReference type="InterPro" id="IPR001469">
    <property type="entry name" value="ATP_synth_F1_dsu/esu"/>
</dbReference>
<dbReference type="InterPro" id="IPR020546">
    <property type="entry name" value="ATP_synth_F1_dsu/esu_N"/>
</dbReference>
<dbReference type="InterPro" id="IPR020547">
    <property type="entry name" value="ATP_synth_F1_esu_C"/>
</dbReference>
<dbReference type="InterPro" id="IPR036771">
    <property type="entry name" value="ATPsynth_dsu/esu_N"/>
</dbReference>
<dbReference type="NCBIfam" id="TIGR01216">
    <property type="entry name" value="ATP_synt_epsi"/>
    <property type="match status" value="1"/>
</dbReference>
<dbReference type="NCBIfam" id="NF009984">
    <property type="entry name" value="PRK13450.1"/>
    <property type="match status" value="1"/>
</dbReference>
<dbReference type="PANTHER" id="PTHR13822">
    <property type="entry name" value="ATP SYNTHASE DELTA/EPSILON CHAIN"/>
    <property type="match status" value="1"/>
</dbReference>
<dbReference type="PANTHER" id="PTHR13822:SF10">
    <property type="entry name" value="ATP SYNTHASE EPSILON CHAIN, CHLOROPLASTIC"/>
    <property type="match status" value="1"/>
</dbReference>
<dbReference type="Pfam" id="PF00401">
    <property type="entry name" value="ATP-synt_DE"/>
    <property type="match status" value="1"/>
</dbReference>
<dbReference type="Pfam" id="PF02823">
    <property type="entry name" value="ATP-synt_DE_N"/>
    <property type="match status" value="1"/>
</dbReference>
<dbReference type="SUPFAM" id="SSF46604">
    <property type="entry name" value="Epsilon subunit of F1F0-ATP synthase C-terminal domain"/>
    <property type="match status" value="1"/>
</dbReference>
<dbReference type="SUPFAM" id="SSF51344">
    <property type="entry name" value="Epsilon subunit of F1F0-ATP synthase N-terminal domain"/>
    <property type="match status" value="1"/>
</dbReference>
<comment type="function">
    <text evidence="1">Produces ATP from ADP in the presence of a proton gradient across the membrane.</text>
</comment>
<comment type="subunit">
    <text>F-type ATPases have 2 components, CF(1) - the catalytic core - and CF(0) - the membrane proton channel. CF(1) has five subunits: alpha(3), beta(3), gamma(1), delta(1), epsilon(1). CF(0) has three main subunits: a, b and c.</text>
</comment>
<comment type="subcellular location">
    <subcellularLocation>
        <location evidence="1">Cell membrane</location>
        <topology evidence="1">Peripheral membrane protein</topology>
    </subcellularLocation>
</comment>
<comment type="similarity">
    <text evidence="1">Belongs to the ATPase epsilon chain family.</text>
</comment>
<accession>Q0TNC5</accession>
<proteinExistence type="inferred from homology"/>
<organism>
    <name type="scientific">Clostridium perfringens (strain ATCC 13124 / DSM 756 / JCM 1290 / NCIMB 6125 / NCTC 8237 / Type A)</name>
    <dbReference type="NCBI Taxonomy" id="195103"/>
    <lineage>
        <taxon>Bacteria</taxon>
        <taxon>Bacillati</taxon>
        <taxon>Bacillota</taxon>
        <taxon>Clostridia</taxon>
        <taxon>Eubacteriales</taxon>
        <taxon>Clostridiaceae</taxon>
        <taxon>Clostridium</taxon>
    </lineage>
</organism>
<sequence length="133" mass="15089">MNKFKLIVTTPERVLISGEVSRVLCKNAVGEFEILAGHQPYLTATVPTVTRIDDENGESKYLFTSTGLMKVQNNEVTFCVNSAEWPEEIDEARAMNAKQRAEERLKNKTDELDEKRAKLALARAMSRLKLKEM</sequence>
<gene>
    <name evidence="1" type="primary">atpC</name>
    <name type="ordered locus">CPF_2451</name>
</gene>